<dbReference type="EMBL" id="CP001139">
    <property type="protein sequence ID" value="ACH66567.1"/>
    <property type="molecule type" value="Genomic_DNA"/>
</dbReference>
<dbReference type="RefSeq" id="WP_005420629.1">
    <property type="nucleotide sequence ID" value="NC_011184.1"/>
</dbReference>
<dbReference type="SMR" id="B5FA11"/>
<dbReference type="KEGG" id="vfm:VFMJ11_2131"/>
<dbReference type="HOGENOM" id="CLU_005965_2_1_6"/>
<dbReference type="Proteomes" id="UP000001857">
    <property type="component" value="Chromosome I"/>
</dbReference>
<dbReference type="GO" id="GO:0005524">
    <property type="term" value="F:ATP binding"/>
    <property type="evidence" value="ECO:0007669"/>
    <property type="project" value="UniProtKB-UniRule"/>
</dbReference>
<dbReference type="GO" id="GO:0140662">
    <property type="term" value="F:ATP-dependent protein folding chaperone"/>
    <property type="evidence" value="ECO:0007669"/>
    <property type="project" value="InterPro"/>
</dbReference>
<dbReference type="GO" id="GO:0051082">
    <property type="term" value="F:unfolded protein binding"/>
    <property type="evidence" value="ECO:0007669"/>
    <property type="project" value="InterPro"/>
</dbReference>
<dbReference type="CDD" id="cd10234">
    <property type="entry name" value="ASKHA_NBD_HSP70_DnaK-like"/>
    <property type="match status" value="1"/>
</dbReference>
<dbReference type="FunFam" id="2.60.34.10:FF:000014">
    <property type="entry name" value="Chaperone protein DnaK HSP70"/>
    <property type="match status" value="1"/>
</dbReference>
<dbReference type="FunFam" id="1.20.1270.10:FF:000001">
    <property type="entry name" value="Molecular chaperone DnaK"/>
    <property type="match status" value="1"/>
</dbReference>
<dbReference type="FunFam" id="3.30.420.40:FF:000004">
    <property type="entry name" value="Molecular chaperone DnaK"/>
    <property type="match status" value="1"/>
</dbReference>
<dbReference type="FunFam" id="3.90.640.10:FF:000003">
    <property type="entry name" value="Molecular chaperone DnaK"/>
    <property type="match status" value="1"/>
</dbReference>
<dbReference type="Gene3D" id="1.20.1270.10">
    <property type="match status" value="1"/>
</dbReference>
<dbReference type="Gene3D" id="3.30.420.40">
    <property type="match status" value="2"/>
</dbReference>
<dbReference type="Gene3D" id="3.90.640.10">
    <property type="entry name" value="Actin, Chain A, domain 4"/>
    <property type="match status" value="1"/>
</dbReference>
<dbReference type="Gene3D" id="2.60.34.10">
    <property type="entry name" value="Substrate Binding Domain Of DNAk, Chain A, domain 1"/>
    <property type="match status" value="1"/>
</dbReference>
<dbReference type="HAMAP" id="MF_00332">
    <property type="entry name" value="DnaK"/>
    <property type="match status" value="1"/>
</dbReference>
<dbReference type="InterPro" id="IPR043129">
    <property type="entry name" value="ATPase_NBD"/>
</dbReference>
<dbReference type="InterPro" id="IPR012725">
    <property type="entry name" value="Chaperone_DnaK"/>
</dbReference>
<dbReference type="InterPro" id="IPR018181">
    <property type="entry name" value="Heat_shock_70_CS"/>
</dbReference>
<dbReference type="InterPro" id="IPR029048">
    <property type="entry name" value="HSP70_C_sf"/>
</dbReference>
<dbReference type="InterPro" id="IPR029047">
    <property type="entry name" value="HSP70_peptide-bd_sf"/>
</dbReference>
<dbReference type="InterPro" id="IPR013126">
    <property type="entry name" value="Hsp_70_fam"/>
</dbReference>
<dbReference type="NCBIfam" id="NF001413">
    <property type="entry name" value="PRK00290.1"/>
    <property type="match status" value="1"/>
</dbReference>
<dbReference type="NCBIfam" id="TIGR02350">
    <property type="entry name" value="prok_dnaK"/>
    <property type="match status" value="1"/>
</dbReference>
<dbReference type="PANTHER" id="PTHR19375">
    <property type="entry name" value="HEAT SHOCK PROTEIN 70KDA"/>
    <property type="match status" value="1"/>
</dbReference>
<dbReference type="Pfam" id="PF00012">
    <property type="entry name" value="HSP70"/>
    <property type="match status" value="1"/>
</dbReference>
<dbReference type="PRINTS" id="PR00301">
    <property type="entry name" value="HEATSHOCK70"/>
</dbReference>
<dbReference type="SUPFAM" id="SSF53067">
    <property type="entry name" value="Actin-like ATPase domain"/>
    <property type="match status" value="2"/>
</dbReference>
<dbReference type="SUPFAM" id="SSF100934">
    <property type="entry name" value="Heat shock protein 70kD (HSP70), C-terminal subdomain"/>
    <property type="match status" value="1"/>
</dbReference>
<dbReference type="SUPFAM" id="SSF100920">
    <property type="entry name" value="Heat shock protein 70kD (HSP70), peptide-binding domain"/>
    <property type="match status" value="1"/>
</dbReference>
<dbReference type="PROSITE" id="PS00297">
    <property type="entry name" value="HSP70_1"/>
    <property type="match status" value="1"/>
</dbReference>
<dbReference type="PROSITE" id="PS00329">
    <property type="entry name" value="HSP70_2"/>
    <property type="match status" value="1"/>
</dbReference>
<dbReference type="PROSITE" id="PS01036">
    <property type="entry name" value="HSP70_3"/>
    <property type="match status" value="1"/>
</dbReference>
<accession>B5FA11</accession>
<reference key="1">
    <citation type="submission" date="2008-08" db="EMBL/GenBank/DDBJ databases">
        <title>Complete sequence of Vibrio fischeri strain MJ11.</title>
        <authorList>
            <person name="Mandel M.J."/>
            <person name="Stabb E.V."/>
            <person name="Ruby E.G."/>
            <person name="Ferriera S."/>
            <person name="Johnson J."/>
            <person name="Kravitz S."/>
            <person name="Beeson K."/>
            <person name="Sutton G."/>
            <person name="Rogers Y.-H."/>
            <person name="Friedman R."/>
            <person name="Frazier M."/>
            <person name="Venter J.C."/>
        </authorList>
    </citation>
    <scope>NUCLEOTIDE SEQUENCE [LARGE SCALE GENOMIC DNA]</scope>
    <source>
        <strain>MJ11</strain>
    </source>
</reference>
<evidence type="ECO:0000255" key="1">
    <source>
        <dbReference type="HAMAP-Rule" id="MF_00332"/>
    </source>
</evidence>
<evidence type="ECO:0000256" key="2">
    <source>
        <dbReference type="SAM" id="MobiDB-lite"/>
    </source>
</evidence>
<organism>
    <name type="scientific">Aliivibrio fischeri (strain MJ11)</name>
    <name type="common">Vibrio fischeri</name>
    <dbReference type="NCBI Taxonomy" id="388396"/>
    <lineage>
        <taxon>Bacteria</taxon>
        <taxon>Pseudomonadati</taxon>
        <taxon>Pseudomonadota</taxon>
        <taxon>Gammaproteobacteria</taxon>
        <taxon>Vibrionales</taxon>
        <taxon>Vibrionaceae</taxon>
        <taxon>Aliivibrio</taxon>
    </lineage>
</organism>
<sequence length="634" mass="68572">MGKIIGIDLGTTNSCVAVLDGDTPRVLENAEGERTTASVIAYTDGETLVGQPAKRQAVTNPQNTLFAIKRLIGRRFEDEEVQRDIEIMPFKIVKADNGDAWVEAKGQKMAAPQVSAEVLKKMKKTAEDFLGEEVTGAVVTVPAYFNDAQRQATKDAGRIAGLDVKRIINEPTAAALAYGLDKKGGDRTIAVYDLGGGTFDISIIEIDNVDGEQTFEVLATNGDTHLGGEDFDNRLINYLVSEFEKEQGINLKNDPLAMQRVKEAAEKAKIELSSAQQTDVNLPYVTADATGPKHMNVKVTRAKLESLVEDLVIRSLEPLKVALADSDLSVDEITDVILVGGQTRMPMVQAKVAEFFGKEARRDVNPDEAVAMGAAVQGGVLAGDVKDVLLLDVTPLSFGIETMGGVMTKLIEKNTTIPTKADQTFSTAEDNQSAVTIHVLQGERKQATYNKSLGQFNLEGIQPAPRGMPQIEVTFDLDADGILNVSAKDKSTGKEQKITIQASGGLTDEEIEAMVQEAEANKDADKKFEELVTARNQADQMIHGTQKQIEEAGDALPADEKEKIEAAIKALEEVKSGNDKEAIDAKTQELMQAAQKLMEIAQQKAQAQQGADAGEQPKQDDDVVDAEFEEVKDK</sequence>
<comment type="function">
    <text evidence="1">Acts as a chaperone.</text>
</comment>
<comment type="induction">
    <text evidence="1">By stress conditions e.g. heat shock.</text>
</comment>
<comment type="similarity">
    <text evidence="1">Belongs to the heat shock protein 70 family.</text>
</comment>
<keyword id="KW-0067">ATP-binding</keyword>
<keyword id="KW-0143">Chaperone</keyword>
<keyword id="KW-0547">Nucleotide-binding</keyword>
<keyword id="KW-0597">Phosphoprotein</keyword>
<keyword id="KW-0346">Stress response</keyword>
<proteinExistence type="inferred from homology"/>
<name>DNAK_ALIFM</name>
<gene>
    <name evidence="1" type="primary">dnaK</name>
    <name type="ordered locus">VFMJ11_2131</name>
</gene>
<protein>
    <recommendedName>
        <fullName evidence="1">Chaperone protein DnaK</fullName>
    </recommendedName>
    <alternativeName>
        <fullName evidence="1">HSP70</fullName>
    </alternativeName>
    <alternativeName>
        <fullName evidence="1">Heat shock 70 kDa protein</fullName>
    </alternativeName>
    <alternativeName>
        <fullName evidence="1">Heat shock protein 70</fullName>
    </alternativeName>
</protein>
<feature type="chain" id="PRO_1000119774" description="Chaperone protein DnaK">
    <location>
        <begin position="1"/>
        <end position="634"/>
    </location>
</feature>
<feature type="region of interest" description="Disordered" evidence="2">
    <location>
        <begin position="601"/>
        <end position="634"/>
    </location>
</feature>
<feature type="compositionally biased region" description="Low complexity" evidence="2">
    <location>
        <begin position="601"/>
        <end position="613"/>
    </location>
</feature>
<feature type="modified residue" description="Phosphothreonine; by autocatalysis" evidence="1">
    <location>
        <position position="198"/>
    </location>
</feature>